<feature type="chain" id="PRO_0000196235" description="Leukotoxin">
    <location>
        <begin position="1"/>
        <end position="955"/>
    </location>
</feature>
<feature type="transmembrane region" description="Helical" evidence="2">
    <location>
        <begin position="232"/>
        <end position="252"/>
    </location>
</feature>
<feature type="transmembrane region" description="Helical" evidence="2">
    <location>
        <begin position="299"/>
        <end position="319"/>
    </location>
</feature>
<feature type="transmembrane region" description="Helical" evidence="2">
    <location>
        <begin position="361"/>
        <end position="381"/>
    </location>
</feature>
<feature type="transmembrane region" description="Helical" evidence="2">
    <location>
        <begin position="383"/>
        <end position="403"/>
    </location>
</feature>
<feature type="sequence conflict" description="In Ref. 1; AAB36691." evidence="3" ref="1">
    <location>
        <begin position="7"/>
        <end position="8"/>
    </location>
</feature>
<feature type="sequence conflict" description="In Ref. 1; AAB36691." evidence="3" ref="1">
    <original>A</original>
    <variation>V</variation>
    <location>
        <position position="43"/>
    </location>
</feature>
<feature type="sequence conflict" description="In Ref. 2; CAA81206." evidence="3" ref="2">
    <original>I</original>
    <variation>T</variation>
    <location>
        <position position="133"/>
    </location>
</feature>
<feature type="sequence conflict" description="In Ref. 2; CAA81206." evidence="3" ref="2">
    <original>SILGS</original>
    <variation>GNSRT</variation>
    <location>
        <begin position="149"/>
        <end position="153"/>
    </location>
</feature>
<feature type="sequence conflict" description="In Ref. 1; AAB36691." evidence="3" ref="1">
    <original>D</original>
    <variation>H</variation>
    <location>
        <position position="236"/>
    </location>
</feature>
<feature type="sequence conflict" description="In Ref. 2; CAA81206." evidence="3" ref="2">
    <original>ISG</original>
    <variation>KSR</variation>
    <location>
        <begin position="238"/>
        <end position="240"/>
    </location>
</feature>
<feature type="sequence conflict" description="In Ref. 1; AAB36691." evidence="3" ref="1">
    <original>G</original>
    <variation>R</variation>
    <location>
        <position position="292"/>
    </location>
</feature>
<feature type="sequence conflict" description="In Ref. 2; CAA81206." evidence="3" ref="2">
    <original>L</original>
    <variation>V</variation>
    <location>
        <position position="309"/>
    </location>
</feature>
<feature type="sequence conflict" description="In Ref. 2; CAA81206." evidence="3" ref="2">
    <original>S</original>
    <variation>T</variation>
    <location>
        <position position="525"/>
    </location>
</feature>
<feature type="sequence conflict" description="In Ref. 1; AAB36691." evidence="3" ref="1">
    <original>T</original>
    <variation>P</variation>
    <location>
        <position position="656"/>
    </location>
</feature>
<feature type="sequence conflict" description="In Ref. 2; CAA81206." evidence="3" ref="2">
    <original>V</original>
    <variation>G</variation>
    <location>
        <position position="676"/>
    </location>
</feature>
<feature type="sequence conflict" description="In Ref. 1; AAB36691." evidence="3" ref="1">
    <original>D</original>
    <variation>H</variation>
    <location>
        <position position="777"/>
    </location>
</feature>
<feature type="sequence conflict" description="In Ref. 1; AAB36691." evidence="3" ref="1">
    <original>D</original>
    <variation>V</variation>
    <location>
        <position position="785"/>
    </location>
</feature>
<feature type="sequence conflict" description="In Ref. 2, 3; AAG40310, 4 and 5." evidence="3" ref="2 3 4 5">
    <original>R</original>
    <variation>Q</variation>
    <location>
        <position position="853"/>
    </location>
</feature>
<feature type="sequence conflict" description="In Ref. 1; AAB36691." evidence="3" ref="1">
    <original>E</original>
    <variation>D</variation>
    <location>
        <position position="881"/>
    </location>
</feature>
<feature type="sequence conflict" description="In Ref. 1; AAB36691." evidence="3" ref="1">
    <original>E</original>
    <variation>A</variation>
    <location>
        <position position="884"/>
    </location>
</feature>
<feature type="sequence conflict" description="In Ref. 1, 2, 3; AAG40310, 4 and 5." evidence="3" ref="1 2 3 4 5">
    <original>K</original>
    <variation>N</variation>
    <location>
        <position position="887"/>
    </location>
</feature>
<feature type="sequence conflict" description="In Ref. 1, 2, 3; AAG40310, 4 and 5." evidence="3" ref="1 2 3 4 5">
    <original>DKSDLSQ</original>
    <variation>AQSELTK</variation>
    <location>
        <begin position="891"/>
        <end position="897"/>
    </location>
</feature>
<gene>
    <name type="primary">lktA</name>
</gene>
<protein>
    <recommendedName>
        <fullName>Leukotoxin</fullName>
        <shortName>Lkt</shortName>
    </recommendedName>
</protein>
<proteinExistence type="inferred from homology"/>
<sequence length="955" mass="102128">MGTKLTLSTLSNGIRSTLTATRGGLNRAGQSLTQAGQTLKNGAKKIILYIPKDYKYDSGSGNGLQDLVKAAEELGIEVQKEEGNDIAKAQTSLGTIQNVLGLTERGIVLSAPQLDKLLQKNKVGQALGSSESIAQNFSQAKTVLSGVQSILGSVLAGMDLDEALQNESDQLTLAKAGLELTNSLIENIANSVQTLDAFSEQISQFGSKLQNVKGLGALGDKLKNIGGLDKAGLGLDVISGLLSGATAALVLADKDASTAKKVGAGFELANQVVGNITKAVSSYILAQRVAAGLSSTGPVAALIASTVALAISPLSFAGIADKFDRAKSLENYAERFKKLGYEGDSLLAEYQHGTGTIDASVTAINTALAAIAGGVSAAAAGSVVASPIALLVSGITGVISTILQYSKQAMFEHVANKIHNKIVEWEKNNGGKNYFENGYDARYLANLQDNMKFLLNLNKELQAERVIAITQQQWDSNIGDLAGISRLGEKVLSGKAYVDAFEEGQHLKADKLVQLDSAKGIIDVSNTGEAKTQHILFRTPLLTPGTEKRERVQTGKYEYITKLHINRVDSWQIKDGAASSTFDLTNVVQRIGVELDHAENVIKTKETKIVATLGDGDDNVFVGSGTTEIDGGEGYDRVHYSRGNYGALTIDATKETEQGSYTVNRFVESGKALHEVTSTHTALVGNREEKIEYRHSNNQHHAGYYTKDTLKAVEEIIGTSHNDIFKGSKFNDAFNGGDGVDTIDGNDGNDRLFGGKGDDIIDGGNGDDFIDGGKGNDLLHGGKGDDIFVHRQGDGNDSITESEGNDKLSFSDSNLKDLTFEKVNHHLVITNTKQEKVTIQNWFREAEFAKTIRNYVATRDDKIEEIIGQNGERITSKQVDELIEKGKGKIDKSDLSQVVDNYQLLKYSRDASNSLDKLISSASAFTSSNDSRNVLASPTSMLDPSLSSIQFARAA</sequence>
<reference key="1">
    <citation type="journal article" date="1993" name="Infect. Immun.">
        <title>Molecular analysis of the leukotoxin determinants from Pasteurella haemolytica serotypes 1 to 16.</title>
        <authorList>
            <person name="Burrows L.L."/>
            <person name="Olah-Winfield E."/>
            <person name="Lo R.Y.C."/>
        </authorList>
    </citation>
    <scope>NUCLEOTIDE SEQUENCE [GENOMIC DNA]</scope>
    <source>
        <strain>Serotype T3</strain>
    </source>
</reference>
<reference key="2">
    <citation type="journal article" date="1996" name="Microbiology">
        <title>Characterization of epitopes involved in the neutralization of Pasteurella haemolytica serotype A1 leukotoxin.</title>
        <authorList>
            <person name="Lainson F.A."/>
            <person name="Murray J."/>
            <person name="Davies R.C."/>
            <person name="Donachie W."/>
        </authorList>
    </citation>
    <scope>NUCLEOTIDE SEQUENCE [GENOMIC DNA]</scope>
    <source>
        <strain>Serotype T10 / 152/92</strain>
    </source>
</reference>
<reference key="3">
    <citation type="journal article" date="2001" name="J. Bacteriol.">
        <title>Sequence diversity and molecular evolution of the leukotoxin (lktA) gene in bovine and ovine strains of Mannheimia (Pasteurella) haemolytica.</title>
        <authorList>
            <person name="Davies R.L."/>
            <person name="Whittam T.S."/>
            <person name="Selander R.K."/>
        </authorList>
    </citation>
    <scope>NUCLEOTIDE SEQUENCE [GENOMIC DNA]</scope>
    <source>
        <strain>Serotype T10 / PH252</strain>
        <strain>Serotype T15 / PH254</strain>
        <strain>Serotype T3 / PH68</strain>
        <strain>Serotype T4 / PH246</strain>
    </source>
</reference>
<reference key="4">
    <citation type="submission" date="1993-06" db="EMBL/GenBank/DDBJ databases">
        <title>DNA sequence of the carboxy terminal end of leukotoxin A from the T10 serotype of Pasteurella haemolytica.</title>
        <authorList>
            <person name="Lainson F.A."/>
            <person name="Aitchison K.D."/>
            <person name="Donachie W."/>
        </authorList>
    </citation>
    <scope>NUCLEOTIDE SEQUENCE [GENOMIC DNA] OF 723-955</scope>
    <source>
        <strain>Serotype T10</strain>
    </source>
</reference>
<reference key="5">
    <citation type="submission" date="1993-06" db="EMBL/GenBank/DDBJ databases">
        <title>DNA sequence of the carboxy terminal end of leukotoxin A from the T3 serotype of Pasteurella haemolytica.</title>
        <authorList>
            <person name="Lainson F.A."/>
            <person name="Aitchison K.D."/>
            <person name="Donachie W."/>
        </authorList>
    </citation>
    <scope>NUCLEOTIDE SEQUENCE [GENOMIC DNA] OF 745-955</scope>
    <source>
        <strain>Serotype T3</strain>
    </source>
</reference>
<reference key="6">
    <citation type="submission" date="1993-06" db="EMBL/GenBank/DDBJ databases">
        <title>DNA sequence of the carboxy terminal end of leukotoxin A from the T4 serotype of Pasteurella haemolytica.</title>
        <authorList>
            <person name="Lainson F.A."/>
            <person name="Aitchison K.D."/>
            <person name="Donachie W."/>
        </authorList>
    </citation>
    <scope>NUCLEOTIDE SEQUENCE [GENOMIC DNA] OF 748-955</scope>
    <source>
        <strain>Serotype T4</strain>
    </source>
</reference>
<reference key="7">
    <citation type="submission" date="1993-06" db="EMBL/GenBank/DDBJ databases">
        <title>DNA sequence of the carboxy terminal end of leukotoxin A from the T15 serotype of Pasteurella haemolytica.</title>
        <authorList>
            <person name="Lainson F.A."/>
            <person name="Aitchison K.D."/>
            <person name="Donachie W."/>
        </authorList>
    </citation>
    <scope>NUCLEOTIDE SEQUENCE [GENOMIC DNA] OF 756-955</scope>
    <source>
        <strain>Serotype T15</strain>
    </source>
</reference>
<accession>P55117</accession>
<accession>P55116</accession>
<accession>Q51865</accession>
<accession>Q51866</accession>
<accession>Q51867</accession>
<accession>Q51868</accession>
<accession>Q798V3</accession>
<accession>Q798V4</accession>
<accession>Q9EUD4</accession>
<accession>Q9EV22</accession>
<comment type="function">
    <text evidence="1">Pasteurella leukotoxins are exotoxins that attack host leukocytes and especially polymorphonuclear cells, by causing cell rupture. The leukotoxin binds to the host LFA-1 integrin and induces a signaling cascade leading to many biological effects, including tyrosine phosphorylation of the CD18 tail, elevation of the intracellular Ca(2+) and lysis of the host cell (By similarity). This leukotoxin is a major contributor to the pathogenesis of lung injury in ovine pneumonic pasteurellosis. It also has weak hemolytic activity.</text>
</comment>
<comment type="subcellular location">
    <subcellularLocation>
        <location evidence="1">Secreted</location>
    </subcellularLocation>
    <subcellularLocation>
        <location evidence="1">Host cell membrane</location>
        <topology evidence="1">Multi-pass membrane protein</topology>
    </subcellularLocation>
</comment>
<comment type="domain">
    <text evidence="1">The transmembrane domains are believed to be involved in pore formation in target cells.</text>
</comment>
<comment type="domain">
    <text evidence="1">The Gly-rich region is probably involved in calcium binding, which is required for target cell-binding and cytolytic activity.</text>
</comment>
<comment type="domain">
    <text evidence="1">The C-terminal domain contains an export signal that is recognized by the ABC transporter complex LktBD.</text>
</comment>
<comment type="PTM">
    <text evidence="1">Acylated by LktC. The toxin only becomes active when modified (By similarity).</text>
</comment>
<comment type="miscellaneous">
    <text>The lktCABD operon has a complex mosaic structure that has been derived by extensive inter- and intraspecies horizontal DNA transfer and intragenic recombination events.</text>
</comment>
<comment type="similarity">
    <text evidence="3">Belongs to the RTX prokaryotic toxin (TC 1.C.11) family.</text>
</comment>
<evidence type="ECO:0000250" key="1"/>
<evidence type="ECO:0000255" key="2"/>
<evidence type="ECO:0000305" key="3"/>
<organism>
    <name type="scientific">Bibersteinia trehalosi</name>
    <name type="common">Pasteurella trehalosi</name>
    <dbReference type="NCBI Taxonomy" id="47735"/>
    <lineage>
        <taxon>Bacteria</taxon>
        <taxon>Pseudomonadati</taxon>
        <taxon>Pseudomonadota</taxon>
        <taxon>Gammaproteobacteria</taxon>
        <taxon>Pasteurellales</taxon>
        <taxon>Pasteurellaceae</taxon>
        <taxon>Bibersteinia</taxon>
    </lineage>
</organism>
<name>LKTA_BIBTR</name>
<keyword id="KW-0106">Calcium</keyword>
<keyword id="KW-0204">Cytolysis</keyword>
<keyword id="KW-0354">Hemolysis</keyword>
<keyword id="KW-1032">Host cell membrane</keyword>
<keyword id="KW-1043">Host membrane</keyword>
<keyword id="KW-0449">Lipoprotein</keyword>
<keyword id="KW-0472">Membrane</keyword>
<keyword id="KW-0677">Repeat</keyword>
<keyword id="KW-0964">Secreted</keyword>
<keyword id="KW-0800">Toxin</keyword>
<keyword id="KW-0812">Transmembrane</keyword>
<keyword id="KW-1133">Transmembrane helix</keyword>
<keyword id="KW-0843">Virulence</keyword>
<dbReference type="EMBL" id="U01216">
    <property type="protein sequence ID" value="AAB36691.1"/>
    <property type="molecule type" value="Unassigned_DNA"/>
</dbReference>
<dbReference type="EMBL" id="Z26247">
    <property type="protein sequence ID" value="CAA81206.1"/>
    <property type="molecule type" value="Genomic_DNA"/>
</dbReference>
<dbReference type="EMBL" id="AF314523">
    <property type="protein sequence ID" value="AAG40307.1"/>
    <property type="molecule type" value="Genomic_DNA"/>
</dbReference>
<dbReference type="EMBL" id="AF314524">
    <property type="protein sequence ID" value="AAG40308.1"/>
    <property type="molecule type" value="Genomic_DNA"/>
</dbReference>
<dbReference type="EMBL" id="AF314525">
    <property type="protein sequence ID" value="AAG40309.1"/>
    <property type="molecule type" value="Genomic_DNA"/>
</dbReference>
<dbReference type="EMBL" id="AF314526">
    <property type="protein sequence ID" value="AAG40310.1"/>
    <property type="molecule type" value="Genomic_DNA"/>
</dbReference>
<dbReference type="EMBL" id="Z22887">
    <property type="protein sequence ID" value="CAA80501.1"/>
    <property type="molecule type" value="Genomic_DNA"/>
</dbReference>
<dbReference type="EMBL" id="Z22884">
    <property type="protein sequence ID" value="CAA80498.1"/>
    <property type="molecule type" value="Genomic_DNA"/>
</dbReference>
<dbReference type="EMBL" id="Z22885">
    <property type="protein sequence ID" value="CAA80499.1"/>
    <property type="molecule type" value="Genomic_DNA"/>
</dbReference>
<dbReference type="EMBL" id="Z22886">
    <property type="protein sequence ID" value="CAA80500.1"/>
    <property type="molecule type" value="Genomic_DNA"/>
</dbReference>
<dbReference type="PIR" id="S34238">
    <property type="entry name" value="S34238"/>
</dbReference>
<dbReference type="PIR" id="S37145">
    <property type="entry name" value="A35254"/>
</dbReference>
<dbReference type="RefSeq" id="WP_015433040.1">
    <property type="nucleotide sequence ID" value="NZ_CP141950.1"/>
</dbReference>
<dbReference type="RefSeq" id="WP_131928249.1">
    <property type="nucleotide sequence ID" value="NZ_SMAM01000003.1"/>
</dbReference>
<dbReference type="SMR" id="P55117"/>
<dbReference type="STRING" id="1263831.F543_6970"/>
<dbReference type="TCDB" id="1.C.11.1.1">
    <property type="family name" value="the pore-forming rtx toxin (rtx-toxin) family"/>
</dbReference>
<dbReference type="GO" id="GO:0005576">
    <property type="term" value="C:extracellular region"/>
    <property type="evidence" value="ECO:0007669"/>
    <property type="project" value="UniProtKB-SubCell"/>
</dbReference>
<dbReference type="GO" id="GO:0020002">
    <property type="term" value="C:host cell plasma membrane"/>
    <property type="evidence" value="ECO:0007669"/>
    <property type="project" value="UniProtKB-SubCell"/>
</dbReference>
<dbReference type="GO" id="GO:0016020">
    <property type="term" value="C:membrane"/>
    <property type="evidence" value="ECO:0007669"/>
    <property type="project" value="UniProtKB-KW"/>
</dbReference>
<dbReference type="GO" id="GO:0005509">
    <property type="term" value="F:calcium ion binding"/>
    <property type="evidence" value="ECO:0007669"/>
    <property type="project" value="InterPro"/>
</dbReference>
<dbReference type="GO" id="GO:0015267">
    <property type="term" value="F:channel activity"/>
    <property type="evidence" value="ECO:0007669"/>
    <property type="project" value="InterPro"/>
</dbReference>
<dbReference type="GO" id="GO:0090729">
    <property type="term" value="F:toxin activity"/>
    <property type="evidence" value="ECO:0007669"/>
    <property type="project" value="UniProtKB-KW"/>
</dbReference>
<dbReference type="GO" id="GO:0031640">
    <property type="term" value="P:killing of cells of another organism"/>
    <property type="evidence" value="ECO:0007669"/>
    <property type="project" value="UniProtKB-KW"/>
</dbReference>
<dbReference type="FunFam" id="2.150.10.10:FF:000002">
    <property type="entry name" value="Leukotoxin"/>
    <property type="match status" value="1"/>
</dbReference>
<dbReference type="Gene3D" id="2.150.10.10">
    <property type="entry name" value="Serralysin-like metalloprotease, C-terminal"/>
    <property type="match status" value="1"/>
</dbReference>
<dbReference type="InterPro" id="IPR018511">
    <property type="entry name" value="Hemolysin-typ_Ca-bd_CS"/>
</dbReference>
<dbReference type="InterPro" id="IPR001343">
    <property type="entry name" value="Hemolysn_Ca-bd"/>
</dbReference>
<dbReference type="InterPro" id="IPR013550">
    <property type="entry name" value="RTX_C"/>
</dbReference>
<dbReference type="InterPro" id="IPR018504">
    <property type="entry name" value="RTX_pore_form"/>
</dbReference>
<dbReference type="InterPro" id="IPR050557">
    <property type="entry name" value="RTX_toxin/Mannuronan_C5-epim"/>
</dbReference>
<dbReference type="InterPro" id="IPR003995">
    <property type="entry name" value="RTX_toxin_determinant-A"/>
</dbReference>
<dbReference type="InterPro" id="IPR011049">
    <property type="entry name" value="Serralysin-like_metalloprot_C"/>
</dbReference>
<dbReference type="NCBIfam" id="NF033943">
    <property type="entry name" value="RTX_toxin"/>
    <property type="match status" value="1"/>
</dbReference>
<dbReference type="PANTHER" id="PTHR38340">
    <property type="entry name" value="S-LAYER PROTEIN"/>
    <property type="match status" value="1"/>
</dbReference>
<dbReference type="PANTHER" id="PTHR38340:SF1">
    <property type="entry name" value="S-LAYER PROTEIN"/>
    <property type="match status" value="1"/>
</dbReference>
<dbReference type="Pfam" id="PF00353">
    <property type="entry name" value="HemolysinCabind"/>
    <property type="match status" value="2"/>
</dbReference>
<dbReference type="Pfam" id="PF02382">
    <property type="entry name" value="RTX"/>
    <property type="match status" value="1"/>
</dbReference>
<dbReference type="Pfam" id="PF08339">
    <property type="entry name" value="RTX_C"/>
    <property type="match status" value="1"/>
</dbReference>
<dbReference type="PRINTS" id="PR00313">
    <property type="entry name" value="CABNDNGRPT"/>
</dbReference>
<dbReference type="PRINTS" id="PR01488">
    <property type="entry name" value="RTXTOXINA"/>
</dbReference>
<dbReference type="SUPFAM" id="SSF51120">
    <property type="entry name" value="beta-Roll"/>
    <property type="match status" value="1"/>
</dbReference>
<dbReference type="PROSITE" id="PS00330">
    <property type="entry name" value="HEMOLYSIN_CALCIUM"/>
    <property type="match status" value="4"/>
</dbReference>